<reference evidence="6" key="1">
    <citation type="journal article" date="2011" name="ACS Chem. Biol.">
        <title>The discovery of cyclotides in the Fabaceae plant family provides new insights into the cyclization, evolution and distribution of circular proteins.</title>
        <authorList>
            <person name="Poth A.G."/>
            <person name="Colgrave M.L."/>
            <person name="Philip R."/>
            <person name="Kerenga B."/>
            <person name="Daly N.L."/>
            <person name="Anderson M."/>
            <person name="Craik D.J."/>
        </authorList>
    </citation>
    <scope>PROTEIN SEQUENCE</scope>
    <scope>PRESENCE OF DISULFIDE BONDS</scope>
    <scope>CYCLIZATION</scope>
    <scope>MASS SPECTROMETRY</scope>
    <source>
        <tissue evidence="3">Seed</tissue>
    </source>
</reference>
<reference evidence="6" key="2">
    <citation type="journal article" date="2011" name="J. Biol. Chem.">
        <title>Discovery and characterization of novel cyclotides originated from chimeric precursors consisting of albumin-1 chain a and cyclotide domains in the fabaceae family.</title>
        <authorList>
            <person name="Nguyen G.K."/>
            <person name="Zhang S."/>
            <person name="Nguyen N.T."/>
            <person name="Nguyen P.Q."/>
            <person name="Chiu M.S."/>
            <person name="Hardjojo A."/>
            <person name="Tam J.P."/>
        </authorList>
    </citation>
    <scope>PROTEIN SEQUENCE</scope>
    <scope>TISSUE SPECIFICITY</scope>
    <scope>PRESENCE OF DISULFIDE BONDS</scope>
    <scope>MASS SPECTROMETRY</scope>
    <scope>IDENTIFICATION BY MASS SPECTROMETRY</scope>
    <scope>CYCLIZATION</scope>
</reference>
<comment type="function">
    <text evidence="2">Probably participates in a plant defense mechanism.</text>
</comment>
<comment type="tissue specificity">
    <text evidence="4">Expressed in root, seed and nodule but not in flower, stem, shoot, leaf and pod.</text>
</comment>
<comment type="domain">
    <text evidence="7">The presence of a 'disulfide through disulfide knot' structurally defines this protein as a knottin.</text>
</comment>
<comment type="PTM">
    <text evidence="3 4">Contains 3 disulfide bonds.</text>
</comment>
<comment type="PTM">
    <text evidence="2 3 4">This is a cyclic peptide.</text>
</comment>
<comment type="mass spectrometry" mass="3264.76" method="Electrospray" evidence="3"/>
<comment type="mass spectrometry" mass="3264.0" method="MALDI" evidence="4"/>
<comment type="similarity">
    <text evidence="2">Belongs to the cyclotide family. Bracelet subfamily.</text>
</comment>
<comment type="caution">
    <text evidence="6">This peptide is cyclic. The start position was chosen by similarity to cyclotide cter-B for which the DNA sequence is known.</text>
</comment>
<protein>
    <recommendedName>
        <fullName evidence="5">Cyclotide cter-D</fullName>
    </recommendedName>
</protein>
<keyword id="KW-0903">Direct protein sequencing</keyword>
<keyword id="KW-1015">Disulfide bond</keyword>
<keyword id="KW-0960">Knottin</keyword>
<keyword id="KW-0611">Plant defense</keyword>
<organism>
    <name type="scientific">Clitoria ternatea</name>
    <name type="common">Butterfly pea</name>
    <dbReference type="NCBI Taxonomy" id="43366"/>
    <lineage>
        <taxon>Eukaryota</taxon>
        <taxon>Viridiplantae</taxon>
        <taxon>Streptophyta</taxon>
        <taxon>Embryophyta</taxon>
        <taxon>Tracheophyta</taxon>
        <taxon>Spermatophyta</taxon>
        <taxon>Magnoliopsida</taxon>
        <taxon>eudicotyledons</taxon>
        <taxon>Gunneridae</taxon>
        <taxon>Pentapetalae</taxon>
        <taxon>rosids</taxon>
        <taxon>fabids</taxon>
        <taxon>Fabales</taxon>
        <taxon>Fabaceae</taxon>
        <taxon>Papilionoideae</taxon>
        <taxon>50 kb inversion clade</taxon>
        <taxon>NPAAA clade</taxon>
        <taxon>indigoferoid/millettioid clade</taxon>
        <taxon>Phaseoleae</taxon>
        <taxon>Clitoria</taxon>
    </lineage>
</organism>
<evidence type="ECO:0000250" key="1">
    <source>
        <dbReference type="UniProtKB" id="P56254"/>
    </source>
</evidence>
<evidence type="ECO:0000255" key="2">
    <source>
        <dbReference type="PROSITE-ProRule" id="PRU00395"/>
    </source>
</evidence>
<evidence type="ECO:0000269" key="3">
    <source>
    </source>
</evidence>
<evidence type="ECO:0000269" key="4">
    <source>
    </source>
</evidence>
<evidence type="ECO:0000303" key="5">
    <source>
    </source>
</evidence>
<evidence type="ECO:0000305" key="6"/>
<evidence type="ECO:0000305" key="7">
    <source>
    </source>
</evidence>
<name>CYCD_CLITE</name>
<dbReference type="SMR" id="P86844"/>
<dbReference type="GO" id="GO:0006952">
    <property type="term" value="P:defense response"/>
    <property type="evidence" value="ECO:0007669"/>
    <property type="project" value="UniProtKB-KW"/>
</dbReference>
<dbReference type="InterPro" id="IPR005535">
    <property type="entry name" value="Cyclotide"/>
</dbReference>
<dbReference type="InterPro" id="IPR012323">
    <property type="entry name" value="Cyclotide_bracelet_CS"/>
</dbReference>
<dbReference type="InterPro" id="IPR036146">
    <property type="entry name" value="Cyclotide_sf"/>
</dbReference>
<dbReference type="Pfam" id="PF03784">
    <property type="entry name" value="Cyclotide"/>
    <property type="match status" value="1"/>
</dbReference>
<dbReference type="PIRSF" id="PIRSF037891">
    <property type="entry name" value="Cycloviolacin"/>
    <property type="match status" value="1"/>
</dbReference>
<dbReference type="SUPFAM" id="SSF57038">
    <property type="entry name" value="Cyclotides"/>
    <property type="match status" value="1"/>
</dbReference>
<dbReference type="PROSITE" id="PS51052">
    <property type="entry name" value="CYCLOTIDE"/>
    <property type="match status" value="1"/>
</dbReference>
<dbReference type="PROSITE" id="PS60008">
    <property type="entry name" value="CYCLOTIDE_BRACELET"/>
    <property type="match status" value="1"/>
</dbReference>
<feature type="peptide" id="PRO_0000405855" description="Cyclotide cter-D" evidence="2 3 4">
    <location>
        <begin position="1"/>
        <end position="31"/>
    </location>
</feature>
<feature type="disulfide bond" evidence="1 2">
    <location>
        <begin position="4"/>
        <end position="21"/>
    </location>
</feature>
<feature type="disulfide bond" evidence="1 2">
    <location>
        <begin position="8"/>
        <end position="23"/>
    </location>
</feature>
<feature type="disulfide bond" evidence="1 2">
    <location>
        <begin position="13"/>
        <end position="28"/>
    </location>
</feature>
<feature type="cross-link" description="Cyclopeptide (Gly-Asn)" evidence="5">
    <location>
        <begin position="1"/>
        <end position="31"/>
    </location>
</feature>
<accession>P86844</accession>
<sequence length="31" mass="3291">GIPCAESCVWIPCTVTALLGCSCKDKVCYLN</sequence>
<proteinExistence type="evidence at protein level"/>